<gene>
    <name type="primary">Dnajb1</name>
    <name type="synonym">Hsp40</name>
    <name type="synonym">Hspf1</name>
</gene>
<protein>
    <recommendedName>
        <fullName>DnaJ homolog subfamily B member 1</fullName>
    </recommendedName>
    <alternativeName>
        <fullName>Heat shock 40 kDa protein 1</fullName>
        <shortName>HSP40</shortName>
        <shortName>Heat shock protein 40</shortName>
    </alternativeName>
</protein>
<feature type="chain" id="PRO_0000071017" description="DnaJ homolog subfamily B member 1">
    <location>
        <begin position="1"/>
        <end position="340"/>
    </location>
</feature>
<feature type="domain" description="J" evidence="3">
    <location>
        <begin position="2"/>
        <end position="70"/>
    </location>
</feature>
<feature type="modified residue" description="Phosphothreonine" evidence="2">
    <location>
        <position position="307"/>
    </location>
</feature>
<organism>
    <name type="scientific">Mus musculus</name>
    <name type="common">Mouse</name>
    <dbReference type="NCBI Taxonomy" id="10090"/>
    <lineage>
        <taxon>Eukaryota</taxon>
        <taxon>Metazoa</taxon>
        <taxon>Chordata</taxon>
        <taxon>Craniata</taxon>
        <taxon>Vertebrata</taxon>
        <taxon>Euteleostomi</taxon>
        <taxon>Mammalia</taxon>
        <taxon>Eutheria</taxon>
        <taxon>Euarchontoglires</taxon>
        <taxon>Glires</taxon>
        <taxon>Rodentia</taxon>
        <taxon>Myomorpha</taxon>
        <taxon>Muroidea</taxon>
        <taxon>Muridae</taxon>
        <taxon>Murinae</taxon>
        <taxon>Mus</taxon>
        <taxon>Mus</taxon>
    </lineage>
</organism>
<dbReference type="EMBL" id="AB028272">
    <property type="protein sequence ID" value="BAA88083.1"/>
    <property type="molecule type" value="mRNA"/>
</dbReference>
<dbReference type="EMBL" id="AB028273">
    <property type="protein sequence ID" value="BAA95672.1"/>
    <property type="molecule type" value="Genomic_DNA"/>
</dbReference>
<dbReference type="EMBL" id="BC012962">
    <property type="protein sequence ID" value="AAH12962.1"/>
    <property type="molecule type" value="mRNA"/>
</dbReference>
<dbReference type="CCDS" id="CCDS22456.1"/>
<dbReference type="RefSeq" id="NP_061278.1">
    <property type="nucleotide sequence ID" value="NM_018808.3"/>
</dbReference>
<dbReference type="SMR" id="Q9QYJ3"/>
<dbReference type="BioGRID" id="219875">
    <property type="interactions" value="25"/>
</dbReference>
<dbReference type="FunCoup" id="Q9QYJ3">
    <property type="interactions" value="1676"/>
</dbReference>
<dbReference type="IntAct" id="Q9QYJ3">
    <property type="interactions" value="1"/>
</dbReference>
<dbReference type="STRING" id="10090.ENSMUSP00000005620"/>
<dbReference type="GlyGen" id="Q9QYJ3">
    <property type="glycosylation" value="1 site, 1 O-linked glycan (1 site)"/>
</dbReference>
<dbReference type="iPTMnet" id="Q9QYJ3"/>
<dbReference type="PhosphoSitePlus" id="Q9QYJ3"/>
<dbReference type="jPOST" id="Q9QYJ3"/>
<dbReference type="PaxDb" id="10090-ENSMUSP00000005620"/>
<dbReference type="ProteomicsDB" id="277478"/>
<dbReference type="Pumba" id="Q9QYJ3"/>
<dbReference type="Antibodypedia" id="26735">
    <property type="antibodies" value="814 antibodies from 41 providers"/>
</dbReference>
<dbReference type="DNASU" id="81489"/>
<dbReference type="Ensembl" id="ENSMUST00000005620.10">
    <property type="protein sequence ID" value="ENSMUSP00000005620.9"/>
    <property type="gene ID" value="ENSMUSG00000005483.11"/>
</dbReference>
<dbReference type="GeneID" id="81489"/>
<dbReference type="KEGG" id="mmu:81489"/>
<dbReference type="UCSC" id="uc009mkp.2">
    <property type="organism name" value="mouse"/>
</dbReference>
<dbReference type="AGR" id="MGI:1931874"/>
<dbReference type="CTD" id="3337"/>
<dbReference type="MGI" id="MGI:1931874">
    <property type="gene designation" value="Dnajb1"/>
</dbReference>
<dbReference type="VEuPathDB" id="HostDB:ENSMUSG00000005483"/>
<dbReference type="eggNOG" id="KOG0714">
    <property type="taxonomic scope" value="Eukaryota"/>
</dbReference>
<dbReference type="GeneTree" id="ENSGT00940000160312"/>
<dbReference type="HOGENOM" id="CLU_017633_0_0_1"/>
<dbReference type="InParanoid" id="Q9QYJ3"/>
<dbReference type="OMA" id="TECTVNI"/>
<dbReference type="OrthoDB" id="550424at2759"/>
<dbReference type="PhylomeDB" id="Q9QYJ3"/>
<dbReference type="TreeFam" id="TF105141"/>
<dbReference type="Reactome" id="R-MMU-3371453">
    <property type="pathway name" value="Regulation of HSF1-mediated heat shock response"/>
</dbReference>
<dbReference type="Reactome" id="R-MMU-3371497">
    <property type="pathway name" value="HSP90 chaperone cycle for steroid hormone receptors (SHR) in the presence of ligand"/>
</dbReference>
<dbReference type="Reactome" id="R-MMU-3371568">
    <property type="pathway name" value="Attenuation phase"/>
</dbReference>
<dbReference type="Reactome" id="R-MMU-3371571">
    <property type="pathway name" value="HSF1-dependent transactivation"/>
</dbReference>
<dbReference type="Reactome" id="R-MMU-5687128">
    <property type="pathway name" value="MAPK6/MAPK4 signaling"/>
</dbReference>
<dbReference type="BioGRID-ORCS" id="81489">
    <property type="hits" value="3 hits in 78 CRISPR screens"/>
</dbReference>
<dbReference type="CD-CODE" id="01CA17F3">
    <property type="entry name" value="Centrosome"/>
</dbReference>
<dbReference type="CD-CODE" id="CE726F99">
    <property type="entry name" value="Postsynaptic density"/>
</dbReference>
<dbReference type="ChiTaRS" id="Dnajb1">
    <property type="organism name" value="mouse"/>
</dbReference>
<dbReference type="PRO" id="PR:Q9QYJ3"/>
<dbReference type="Proteomes" id="UP000000589">
    <property type="component" value="Chromosome 8"/>
</dbReference>
<dbReference type="RNAct" id="Q9QYJ3">
    <property type="molecule type" value="protein"/>
</dbReference>
<dbReference type="Bgee" id="ENSMUSG00000005483">
    <property type="expression patterns" value="Expressed in seminiferous tubule of testis and 263 other cell types or tissues"/>
</dbReference>
<dbReference type="ExpressionAtlas" id="Q9QYJ3">
    <property type="expression patterns" value="baseline and differential"/>
</dbReference>
<dbReference type="GO" id="GO:0005829">
    <property type="term" value="C:cytosol"/>
    <property type="evidence" value="ECO:0007669"/>
    <property type="project" value="Ensembl"/>
</dbReference>
<dbReference type="GO" id="GO:0005730">
    <property type="term" value="C:nucleolus"/>
    <property type="evidence" value="ECO:0007669"/>
    <property type="project" value="UniProtKB-SubCell"/>
</dbReference>
<dbReference type="GO" id="GO:0005654">
    <property type="term" value="C:nucleoplasm"/>
    <property type="evidence" value="ECO:0007669"/>
    <property type="project" value="Ensembl"/>
</dbReference>
<dbReference type="GO" id="GO:0001671">
    <property type="term" value="F:ATPase activator activity"/>
    <property type="evidence" value="ECO:0000250"/>
    <property type="project" value="UniProtKB"/>
</dbReference>
<dbReference type="GO" id="GO:0051117">
    <property type="term" value="F:ATPase binding"/>
    <property type="evidence" value="ECO:0007669"/>
    <property type="project" value="Ensembl"/>
</dbReference>
<dbReference type="GO" id="GO:0030544">
    <property type="term" value="F:Hsp70 protein binding"/>
    <property type="evidence" value="ECO:0007669"/>
    <property type="project" value="Ensembl"/>
</dbReference>
<dbReference type="GO" id="GO:0044183">
    <property type="term" value="F:protein folding chaperone"/>
    <property type="evidence" value="ECO:0000314"/>
    <property type="project" value="UniProtKB"/>
</dbReference>
<dbReference type="GO" id="GO:0003714">
    <property type="term" value="F:transcription corepressor activity"/>
    <property type="evidence" value="ECO:0000250"/>
    <property type="project" value="UniProtKB"/>
</dbReference>
<dbReference type="GO" id="GO:0140416">
    <property type="term" value="F:transcription regulator inhibitor activity"/>
    <property type="evidence" value="ECO:0007669"/>
    <property type="project" value="Ensembl"/>
</dbReference>
<dbReference type="GO" id="GO:0051082">
    <property type="term" value="F:unfolded protein binding"/>
    <property type="evidence" value="ECO:0007669"/>
    <property type="project" value="Ensembl"/>
</dbReference>
<dbReference type="GO" id="GO:0034605">
    <property type="term" value="P:cellular response to heat"/>
    <property type="evidence" value="ECO:0007669"/>
    <property type="project" value="Ensembl"/>
</dbReference>
<dbReference type="GO" id="GO:0051085">
    <property type="term" value="P:chaperone cofactor-dependent protein refolding"/>
    <property type="evidence" value="ECO:0000316"/>
    <property type="project" value="MGI"/>
</dbReference>
<dbReference type="GO" id="GO:0090084">
    <property type="term" value="P:negative regulation of inclusion body assembly"/>
    <property type="evidence" value="ECO:0007669"/>
    <property type="project" value="Ensembl"/>
</dbReference>
<dbReference type="GO" id="GO:0000122">
    <property type="term" value="P:negative regulation of transcription by RNA polymerase II"/>
    <property type="evidence" value="ECO:0000250"/>
    <property type="project" value="UniProtKB"/>
</dbReference>
<dbReference type="GO" id="GO:0006457">
    <property type="term" value="P:protein folding"/>
    <property type="evidence" value="ECO:0000314"/>
    <property type="project" value="UniProtKB"/>
</dbReference>
<dbReference type="CDD" id="cd06257">
    <property type="entry name" value="DnaJ"/>
    <property type="match status" value="1"/>
</dbReference>
<dbReference type="CDD" id="cd10747">
    <property type="entry name" value="DnaJ_C"/>
    <property type="match status" value="1"/>
</dbReference>
<dbReference type="FunFam" id="1.10.287.110:FF:000005">
    <property type="entry name" value="DnaJ (Hsp40) homolog, subfamily B, member 4"/>
    <property type="match status" value="1"/>
</dbReference>
<dbReference type="FunFam" id="2.60.260.20:FF:000002">
    <property type="entry name" value="Dnaj homolog subfamily b member"/>
    <property type="match status" value="1"/>
</dbReference>
<dbReference type="FunFam" id="2.60.260.20:FF:000007">
    <property type="entry name" value="dnaJ homolog subfamily B member 5"/>
    <property type="match status" value="1"/>
</dbReference>
<dbReference type="Gene3D" id="1.10.287.110">
    <property type="entry name" value="DnaJ domain"/>
    <property type="match status" value="1"/>
</dbReference>
<dbReference type="Gene3D" id="2.60.260.20">
    <property type="entry name" value="Urease metallochaperone UreE, N-terminal domain"/>
    <property type="match status" value="2"/>
</dbReference>
<dbReference type="InterPro" id="IPR002939">
    <property type="entry name" value="DnaJ_C"/>
</dbReference>
<dbReference type="InterPro" id="IPR001623">
    <property type="entry name" value="DnaJ_domain"/>
</dbReference>
<dbReference type="InterPro" id="IPR018253">
    <property type="entry name" value="DnaJ_domain_CS"/>
</dbReference>
<dbReference type="InterPro" id="IPR051339">
    <property type="entry name" value="DnaJ_subfamily_B"/>
</dbReference>
<dbReference type="InterPro" id="IPR008971">
    <property type="entry name" value="HSP40/DnaJ_pept-bd"/>
</dbReference>
<dbReference type="InterPro" id="IPR036869">
    <property type="entry name" value="J_dom_sf"/>
</dbReference>
<dbReference type="PANTHER" id="PTHR24078:SF568">
    <property type="entry name" value="DNAJ HOMOLOG SUBFAMILY B MEMBER 1"/>
    <property type="match status" value="1"/>
</dbReference>
<dbReference type="PANTHER" id="PTHR24078">
    <property type="entry name" value="DNAJ HOMOLOG SUBFAMILY C MEMBER"/>
    <property type="match status" value="1"/>
</dbReference>
<dbReference type="Pfam" id="PF00226">
    <property type="entry name" value="DnaJ"/>
    <property type="match status" value="1"/>
</dbReference>
<dbReference type="Pfam" id="PF01556">
    <property type="entry name" value="DnaJ_C"/>
    <property type="match status" value="1"/>
</dbReference>
<dbReference type="PRINTS" id="PR00625">
    <property type="entry name" value="JDOMAIN"/>
</dbReference>
<dbReference type="SMART" id="SM00271">
    <property type="entry name" value="DnaJ"/>
    <property type="match status" value="1"/>
</dbReference>
<dbReference type="SUPFAM" id="SSF46565">
    <property type="entry name" value="Chaperone J-domain"/>
    <property type="match status" value="1"/>
</dbReference>
<dbReference type="SUPFAM" id="SSF49493">
    <property type="entry name" value="HSP40/DnaJ peptide-binding domain"/>
    <property type="match status" value="2"/>
</dbReference>
<dbReference type="PROSITE" id="PS00636">
    <property type="entry name" value="DNAJ_1"/>
    <property type="match status" value="1"/>
</dbReference>
<dbReference type="PROSITE" id="PS50076">
    <property type="entry name" value="DNAJ_2"/>
    <property type="match status" value="1"/>
</dbReference>
<name>DNJB1_MOUSE</name>
<comment type="function">
    <text evidence="2">Interacts with HSP70 and can stimulate its ATPase activity. Stimulates the association between HSC70 and HIP. Negatively regulates heat shock-induced HSF1 transcriptional activity during the attenuation and recovery phase period of the heat shock response. Stimulates ATP hydrolysis and the folding of unfolded proteins mediated by HSPA1A/B (in vitro).</text>
</comment>
<comment type="subunit">
    <text evidence="2">Interacts with DNAJC3. Interacts with HSF1 (via transactivation domain); this interaction results in the inhibition of heat shock- and HSF1-induced transcriptional activity during the attenuation and recovery phase period of the heat shock response. Interacts with BAG3.</text>
</comment>
<comment type="subcellular location">
    <subcellularLocation>
        <location evidence="2">Cytoplasm</location>
    </subcellularLocation>
    <subcellularLocation>
        <location evidence="2">Nucleus</location>
    </subcellularLocation>
    <subcellularLocation>
        <location evidence="2">Nucleus</location>
        <location evidence="2">Nucleolus</location>
    </subcellularLocation>
    <text evidence="2">Translocates rapidly from the cytoplasm to the nucleus, and especially to the nucleoli, upon heat shock.</text>
</comment>
<comment type="induction">
    <text evidence="1">By heat shock.</text>
</comment>
<accession>Q9QYJ3</accession>
<reference key="1">
    <citation type="journal article" date="2000" name="DNA Seq.">
        <title>Cloning and expression of murine Hsp40 gene: differences in initiation sites between heat-induced and constitutive transcripts.</title>
        <authorList>
            <person name="Hata M."/>
            <person name="Ohtsuka K."/>
        </authorList>
    </citation>
    <scope>NUCLEOTIDE SEQUENCE [GENOMIC DNA / MRNA]</scope>
    <source>
        <strain>BALB/cJ</strain>
        <tissue>Liver</tissue>
        <tissue>Testis</tissue>
    </source>
</reference>
<reference key="2">
    <citation type="journal article" date="2004" name="Genome Res.">
        <title>The status, quality, and expansion of the NIH full-length cDNA project: the Mammalian Gene Collection (MGC).</title>
        <authorList>
            <consortium name="The MGC Project Team"/>
        </authorList>
    </citation>
    <scope>NUCLEOTIDE SEQUENCE [LARGE SCALE MRNA]</scope>
    <source>
        <strain>FVB/N</strain>
        <tissue>Salivary gland</tissue>
    </source>
</reference>
<reference key="3">
    <citation type="journal article" date="2010" name="Cell">
        <title>A tissue-specific atlas of mouse protein phosphorylation and expression.</title>
        <authorList>
            <person name="Huttlin E.L."/>
            <person name="Jedrychowski M.P."/>
            <person name="Elias J.E."/>
            <person name="Goswami T."/>
            <person name="Rad R."/>
            <person name="Beausoleil S.A."/>
            <person name="Villen J."/>
            <person name="Haas W."/>
            <person name="Sowa M.E."/>
            <person name="Gygi S.P."/>
        </authorList>
    </citation>
    <scope>IDENTIFICATION BY MASS SPECTROMETRY [LARGE SCALE ANALYSIS]</scope>
    <source>
        <tissue>Brain</tissue>
        <tissue>Brown adipose tissue</tissue>
        <tissue>Kidney</tissue>
        <tissue>Lung</tissue>
        <tissue>Spleen</tissue>
        <tissue>Testis</tissue>
    </source>
</reference>
<keyword id="KW-0143">Chaperone</keyword>
<keyword id="KW-0963">Cytoplasm</keyword>
<keyword id="KW-0539">Nucleus</keyword>
<keyword id="KW-0597">Phosphoprotein</keyword>
<keyword id="KW-1185">Reference proteome</keyword>
<keyword id="KW-0346">Stress response</keyword>
<sequence>MGKDYYQTLGLARGASDDEIKRAYRRQALRYHPDKNKEPGAEEKFKEIAEAYDVLSDPRKREIFDRYGEEGLKGGSPSGGSSGGANGTSFSYTFHGDPHAMFAEFFGGRNPFDTFFGQRNGEEGMDIDDTFSSFPMGMGGFTNMNFGRSRPSQEPTRKKQDPPVTHDLRVSLEEIYSGCTKKMKISHKRLNPDGKSIRNEDKILTIEVKRGWKEGTKITFPKEGDQTSNNIPADIVFVLKDKPHNIFKRDGSDVIYPARISLREALCGCTVNVPTLDGRTIPVVFKDVIRPGMRRKVPGEGLPLPKTPEKRGDLVIEFEVIFPERIPVSSRTILEQVLPI</sequence>
<evidence type="ECO:0000250" key="1"/>
<evidence type="ECO:0000250" key="2">
    <source>
        <dbReference type="UniProtKB" id="P25685"/>
    </source>
</evidence>
<evidence type="ECO:0000255" key="3">
    <source>
        <dbReference type="PROSITE-ProRule" id="PRU00286"/>
    </source>
</evidence>
<proteinExistence type="evidence at protein level"/>